<keyword id="KW-0067">ATP-binding</keyword>
<keyword id="KW-0460">Magnesium</keyword>
<keyword id="KW-0547">Nucleotide-binding</keyword>
<keyword id="KW-1185">Reference proteome</keyword>
<keyword id="KW-0808">Transferase</keyword>
<keyword id="KW-0819">tRNA processing</keyword>
<gene>
    <name evidence="1" type="primary">miaA</name>
    <name type="ordered locus">Tbd_1512</name>
</gene>
<dbReference type="EC" id="2.5.1.75" evidence="1"/>
<dbReference type="EMBL" id="CP000116">
    <property type="protein sequence ID" value="AAZ97465.1"/>
    <property type="molecule type" value="Genomic_DNA"/>
</dbReference>
<dbReference type="RefSeq" id="WP_011312024.1">
    <property type="nucleotide sequence ID" value="NC_007404.1"/>
</dbReference>
<dbReference type="SMR" id="Q3SIR0"/>
<dbReference type="STRING" id="292415.Tbd_1512"/>
<dbReference type="KEGG" id="tbd:Tbd_1512"/>
<dbReference type="eggNOG" id="COG0324">
    <property type="taxonomic scope" value="Bacteria"/>
</dbReference>
<dbReference type="HOGENOM" id="CLU_032616_0_0_4"/>
<dbReference type="OrthoDB" id="9776390at2"/>
<dbReference type="Proteomes" id="UP000008291">
    <property type="component" value="Chromosome"/>
</dbReference>
<dbReference type="GO" id="GO:0005524">
    <property type="term" value="F:ATP binding"/>
    <property type="evidence" value="ECO:0007669"/>
    <property type="project" value="UniProtKB-UniRule"/>
</dbReference>
<dbReference type="GO" id="GO:0052381">
    <property type="term" value="F:tRNA dimethylallyltransferase activity"/>
    <property type="evidence" value="ECO:0007669"/>
    <property type="project" value="UniProtKB-UniRule"/>
</dbReference>
<dbReference type="GO" id="GO:0006400">
    <property type="term" value="P:tRNA modification"/>
    <property type="evidence" value="ECO:0007669"/>
    <property type="project" value="TreeGrafter"/>
</dbReference>
<dbReference type="FunFam" id="1.10.20.140:FF:000001">
    <property type="entry name" value="tRNA dimethylallyltransferase"/>
    <property type="match status" value="1"/>
</dbReference>
<dbReference type="Gene3D" id="1.10.20.140">
    <property type="match status" value="1"/>
</dbReference>
<dbReference type="Gene3D" id="3.40.50.300">
    <property type="entry name" value="P-loop containing nucleotide triphosphate hydrolases"/>
    <property type="match status" value="1"/>
</dbReference>
<dbReference type="HAMAP" id="MF_00185">
    <property type="entry name" value="IPP_trans"/>
    <property type="match status" value="1"/>
</dbReference>
<dbReference type="InterPro" id="IPR039657">
    <property type="entry name" value="Dimethylallyltransferase"/>
</dbReference>
<dbReference type="InterPro" id="IPR018022">
    <property type="entry name" value="IPT"/>
</dbReference>
<dbReference type="InterPro" id="IPR027417">
    <property type="entry name" value="P-loop_NTPase"/>
</dbReference>
<dbReference type="NCBIfam" id="TIGR00174">
    <property type="entry name" value="miaA"/>
    <property type="match status" value="1"/>
</dbReference>
<dbReference type="PANTHER" id="PTHR11088">
    <property type="entry name" value="TRNA DIMETHYLALLYLTRANSFERASE"/>
    <property type="match status" value="1"/>
</dbReference>
<dbReference type="PANTHER" id="PTHR11088:SF60">
    <property type="entry name" value="TRNA DIMETHYLALLYLTRANSFERASE"/>
    <property type="match status" value="1"/>
</dbReference>
<dbReference type="Pfam" id="PF01715">
    <property type="entry name" value="IPPT"/>
    <property type="match status" value="1"/>
</dbReference>
<dbReference type="SUPFAM" id="SSF52540">
    <property type="entry name" value="P-loop containing nucleoside triphosphate hydrolases"/>
    <property type="match status" value="2"/>
</dbReference>
<protein>
    <recommendedName>
        <fullName evidence="1">tRNA dimethylallyltransferase</fullName>
        <ecNumber evidence="1">2.5.1.75</ecNumber>
    </recommendedName>
    <alternativeName>
        <fullName evidence="1">Dimethylallyl diphosphate:tRNA dimethylallyltransferase</fullName>
        <shortName evidence="1">DMAPP:tRNA dimethylallyltransferase</shortName>
        <shortName evidence="1">DMATase</shortName>
    </alternativeName>
    <alternativeName>
        <fullName evidence="1">Isopentenyl-diphosphate:tRNA isopentenyltransferase</fullName>
        <shortName evidence="1">IPP transferase</shortName>
        <shortName evidence="1">IPPT</shortName>
        <shortName evidence="1">IPTase</shortName>
    </alternativeName>
</protein>
<organism>
    <name type="scientific">Thiobacillus denitrificans (strain ATCC 25259 / T1)</name>
    <dbReference type="NCBI Taxonomy" id="292415"/>
    <lineage>
        <taxon>Bacteria</taxon>
        <taxon>Pseudomonadati</taxon>
        <taxon>Pseudomonadota</taxon>
        <taxon>Betaproteobacteria</taxon>
        <taxon>Nitrosomonadales</taxon>
        <taxon>Thiobacillaceae</taxon>
        <taxon>Thiobacillus</taxon>
    </lineage>
</organism>
<reference key="1">
    <citation type="journal article" date="2006" name="J. Bacteriol.">
        <title>The genome sequence of the obligately chemolithoautotrophic, facultatively anaerobic bacterium Thiobacillus denitrificans.</title>
        <authorList>
            <person name="Beller H.R."/>
            <person name="Chain P.S."/>
            <person name="Letain T.E."/>
            <person name="Chakicherla A."/>
            <person name="Larimer F.W."/>
            <person name="Richardson P.M."/>
            <person name="Coleman M.A."/>
            <person name="Wood A.P."/>
            <person name="Kelly D.P."/>
        </authorList>
    </citation>
    <scope>NUCLEOTIDE SEQUENCE [LARGE SCALE GENOMIC DNA]</scope>
    <source>
        <strain>ATCC 25259 / T1</strain>
    </source>
</reference>
<accession>Q3SIR0</accession>
<sequence length="313" mass="33899">MSTLGLPPAVFLMGPTASGKTALAVSLRSRFPFEIISVDSALVYRGMDVGTAKPDAATLARAPHHLLDIREPNETYSAAAFCDDARARMAAITARGRVPLLVGGTMLYFRALLQGLDDLPRADAALRKRLEQDAAERGWPALHAELAALDPATAARLAPNDSQRIGRALEIVELTGRPMSAQLAQTPRALPYDVLQLALVPSDRAALHRRIGERFDAMLEAGLVDEVEMLRRNHVLDSTMPAMRAVGYRQAWAYLDGDIDLEALREQGVAATRQLAKRQLTWLRSWPGAVTLDCLADDLESRAAALVAAHLGA</sequence>
<comment type="function">
    <text evidence="1">Catalyzes the transfer of a dimethylallyl group onto the adenine at position 37 in tRNAs that read codons beginning with uridine, leading to the formation of N6-(dimethylallyl)adenosine (i(6)A).</text>
</comment>
<comment type="catalytic activity">
    <reaction evidence="1">
        <text>adenosine(37) in tRNA + dimethylallyl diphosphate = N(6)-dimethylallyladenosine(37) in tRNA + diphosphate</text>
        <dbReference type="Rhea" id="RHEA:26482"/>
        <dbReference type="Rhea" id="RHEA-COMP:10162"/>
        <dbReference type="Rhea" id="RHEA-COMP:10375"/>
        <dbReference type="ChEBI" id="CHEBI:33019"/>
        <dbReference type="ChEBI" id="CHEBI:57623"/>
        <dbReference type="ChEBI" id="CHEBI:74411"/>
        <dbReference type="ChEBI" id="CHEBI:74415"/>
        <dbReference type="EC" id="2.5.1.75"/>
    </reaction>
</comment>
<comment type="cofactor">
    <cofactor evidence="1">
        <name>Mg(2+)</name>
        <dbReference type="ChEBI" id="CHEBI:18420"/>
    </cofactor>
</comment>
<comment type="subunit">
    <text evidence="1">Monomer.</text>
</comment>
<comment type="similarity">
    <text evidence="1">Belongs to the IPP transferase family.</text>
</comment>
<proteinExistence type="inferred from homology"/>
<name>MIAA_THIDA</name>
<feature type="chain" id="PRO_0000377358" description="tRNA dimethylallyltransferase">
    <location>
        <begin position="1"/>
        <end position="313"/>
    </location>
</feature>
<feature type="region of interest" description="Interaction with substrate tRNA" evidence="1">
    <location>
        <begin position="39"/>
        <end position="42"/>
    </location>
</feature>
<feature type="region of interest" description="Interaction with substrate tRNA" evidence="1">
    <location>
        <begin position="163"/>
        <end position="167"/>
    </location>
</feature>
<feature type="binding site" evidence="1">
    <location>
        <begin position="14"/>
        <end position="21"/>
    </location>
    <ligand>
        <name>ATP</name>
        <dbReference type="ChEBI" id="CHEBI:30616"/>
    </ligand>
</feature>
<feature type="binding site" evidence="1">
    <location>
        <begin position="16"/>
        <end position="21"/>
    </location>
    <ligand>
        <name>substrate</name>
    </ligand>
</feature>
<feature type="site" description="Interaction with substrate tRNA" evidence="1">
    <location>
        <position position="105"/>
    </location>
</feature>
<feature type="site" description="Interaction with substrate tRNA" evidence="1">
    <location>
        <position position="127"/>
    </location>
</feature>
<evidence type="ECO:0000255" key="1">
    <source>
        <dbReference type="HAMAP-Rule" id="MF_00185"/>
    </source>
</evidence>